<keyword id="KW-0414">Isoprene biosynthesis</keyword>
<keyword id="KW-0464">Manganese</keyword>
<keyword id="KW-0479">Metal-binding</keyword>
<keyword id="KW-0521">NADP</keyword>
<keyword id="KW-0560">Oxidoreductase</keyword>
<name>DXR_FRAT1</name>
<evidence type="ECO:0000255" key="1">
    <source>
        <dbReference type="HAMAP-Rule" id="MF_00183"/>
    </source>
</evidence>
<accession>Q14G49</accession>
<dbReference type="EC" id="1.1.1.267" evidence="1"/>
<dbReference type="EMBL" id="AM286280">
    <property type="protein sequence ID" value="CAL09590.1"/>
    <property type="molecule type" value="Genomic_DNA"/>
</dbReference>
<dbReference type="RefSeq" id="WP_003018074.1">
    <property type="nucleotide sequence ID" value="NC_008245.1"/>
</dbReference>
<dbReference type="SMR" id="Q14G49"/>
<dbReference type="KEGG" id="ftf:FTF1574c"/>
<dbReference type="HOGENOM" id="CLU_035714_4_0_6"/>
<dbReference type="UniPathway" id="UPA00056">
    <property type="reaction ID" value="UER00092"/>
</dbReference>
<dbReference type="GO" id="GO:0030604">
    <property type="term" value="F:1-deoxy-D-xylulose-5-phosphate reductoisomerase activity"/>
    <property type="evidence" value="ECO:0007669"/>
    <property type="project" value="UniProtKB-UniRule"/>
</dbReference>
<dbReference type="GO" id="GO:0030145">
    <property type="term" value="F:manganese ion binding"/>
    <property type="evidence" value="ECO:0007669"/>
    <property type="project" value="TreeGrafter"/>
</dbReference>
<dbReference type="GO" id="GO:0070402">
    <property type="term" value="F:NADPH binding"/>
    <property type="evidence" value="ECO:0007669"/>
    <property type="project" value="InterPro"/>
</dbReference>
<dbReference type="GO" id="GO:0051484">
    <property type="term" value="P:isopentenyl diphosphate biosynthetic process, methylerythritol 4-phosphate pathway involved in terpenoid biosynthetic process"/>
    <property type="evidence" value="ECO:0007669"/>
    <property type="project" value="TreeGrafter"/>
</dbReference>
<dbReference type="FunFam" id="3.40.50.720:FF:000045">
    <property type="entry name" value="1-deoxy-D-xylulose 5-phosphate reductoisomerase"/>
    <property type="match status" value="1"/>
</dbReference>
<dbReference type="Gene3D" id="1.10.1740.10">
    <property type="match status" value="1"/>
</dbReference>
<dbReference type="Gene3D" id="3.40.50.720">
    <property type="entry name" value="NAD(P)-binding Rossmann-like Domain"/>
    <property type="match status" value="1"/>
</dbReference>
<dbReference type="HAMAP" id="MF_00183">
    <property type="entry name" value="DXP_reductoisom"/>
    <property type="match status" value="1"/>
</dbReference>
<dbReference type="InterPro" id="IPR003821">
    <property type="entry name" value="DXP_reductoisomerase"/>
</dbReference>
<dbReference type="InterPro" id="IPR013644">
    <property type="entry name" value="DXP_reductoisomerase_C"/>
</dbReference>
<dbReference type="InterPro" id="IPR013512">
    <property type="entry name" value="DXP_reductoisomerase_N"/>
</dbReference>
<dbReference type="InterPro" id="IPR026877">
    <property type="entry name" value="DXPR_C"/>
</dbReference>
<dbReference type="InterPro" id="IPR036169">
    <property type="entry name" value="DXPR_C_sf"/>
</dbReference>
<dbReference type="InterPro" id="IPR036291">
    <property type="entry name" value="NAD(P)-bd_dom_sf"/>
</dbReference>
<dbReference type="NCBIfam" id="TIGR00243">
    <property type="entry name" value="Dxr"/>
    <property type="match status" value="1"/>
</dbReference>
<dbReference type="PANTHER" id="PTHR30525">
    <property type="entry name" value="1-DEOXY-D-XYLULOSE 5-PHOSPHATE REDUCTOISOMERASE"/>
    <property type="match status" value="1"/>
</dbReference>
<dbReference type="PANTHER" id="PTHR30525:SF0">
    <property type="entry name" value="1-DEOXY-D-XYLULOSE 5-PHOSPHATE REDUCTOISOMERASE, CHLOROPLASTIC"/>
    <property type="match status" value="1"/>
</dbReference>
<dbReference type="Pfam" id="PF08436">
    <property type="entry name" value="DXP_redisom_C"/>
    <property type="match status" value="1"/>
</dbReference>
<dbReference type="Pfam" id="PF02670">
    <property type="entry name" value="DXP_reductoisom"/>
    <property type="match status" value="1"/>
</dbReference>
<dbReference type="Pfam" id="PF13288">
    <property type="entry name" value="DXPR_C"/>
    <property type="match status" value="1"/>
</dbReference>
<dbReference type="PIRSF" id="PIRSF006205">
    <property type="entry name" value="Dxp_reductismrs"/>
    <property type="match status" value="1"/>
</dbReference>
<dbReference type="SUPFAM" id="SSF69055">
    <property type="entry name" value="1-deoxy-D-xylulose-5-phosphate reductoisomerase, C-terminal domain"/>
    <property type="match status" value="1"/>
</dbReference>
<dbReference type="SUPFAM" id="SSF55347">
    <property type="entry name" value="Glyceraldehyde-3-phosphate dehydrogenase-like, C-terminal domain"/>
    <property type="match status" value="1"/>
</dbReference>
<dbReference type="SUPFAM" id="SSF51735">
    <property type="entry name" value="NAD(P)-binding Rossmann-fold domains"/>
    <property type="match status" value="1"/>
</dbReference>
<reference key="1">
    <citation type="journal article" date="2007" name="PLoS ONE">
        <title>Genome sequencing shows that European isolates of Francisella tularensis subspecies tularensis are almost identical to US laboratory strain Schu S4.</title>
        <authorList>
            <person name="Chaudhuri R.R."/>
            <person name="Ren C.-P."/>
            <person name="Desmond L."/>
            <person name="Vincent G.A."/>
            <person name="Silman N.J."/>
            <person name="Brehm J.K."/>
            <person name="Elmore M.J."/>
            <person name="Hudson M.J."/>
            <person name="Forsman M."/>
            <person name="Isherwood K.E."/>
            <person name="Gurycova D."/>
            <person name="Minton N.P."/>
            <person name="Titball R.W."/>
            <person name="Pallen M.J."/>
            <person name="Vipond R."/>
        </authorList>
    </citation>
    <scope>NUCLEOTIDE SEQUENCE [LARGE SCALE GENOMIC DNA]</scope>
    <source>
        <strain>FSC 198</strain>
    </source>
</reference>
<gene>
    <name evidence="1" type="primary">dxr</name>
    <name type="ordered locus">FTF1574c</name>
</gene>
<proteinExistence type="inferred from homology"/>
<sequence length="385" mass="42847">MFKKTKITILGATGSIGDSTLAVIRETNDFEVFALTAFSNVEKLAELCQEFKPKFAVVPDLSKKQKLQSLVTDVEVLVGESGLEKVSSLAEIDIVMSAIVGIAGLKPTFAAAKAGKKILLANKESLVTAGHLLIDEVVKNNAQLIPVDSEHNAIFQCIDNHDKKCLPEIDKIILTASGGPFRDKQLHELTDVTPEQACNHPNWQMGRKISVDSSTMVNKALEVIEAYWLFSVSADKIGVLIHPQSVTHSMVRYVDGSYIAQLGVPDMKTPIANAMYYPKRGSVNVESLDFTKYQLTFREACFERFEALKIVFNNLQNKNYAANIVFNAANEELVAAFLNKKIKYLEIIEVNKKVTKELNFENPKNIEEVFEIDRKTREYVDSVLG</sequence>
<protein>
    <recommendedName>
        <fullName evidence="1">1-deoxy-D-xylulose 5-phosphate reductoisomerase</fullName>
        <shortName evidence="1">DXP reductoisomerase</shortName>
        <ecNumber evidence="1">1.1.1.267</ecNumber>
    </recommendedName>
    <alternativeName>
        <fullName evidence="1">1-deoxyxylulose-5-phosphate reductoisomerase</fullName>
    </alternativeName>
    <alternativeName>
        <fullName evidence="1">2-C-methyl-D-erythritol 4-phosphate synthase</fullName>
    </alternativeName>
</protein>
<organism>
    <name type="scientific">Francisella tularensis subsp. tularensis (strain FSC 198)</name>
    <dbReference type="NCBI Taxonomy" id="393115"/>
    <lineage>
        <taxon>Bacteria</taxon>
        <taxon>Pseudomonadati</taxon>
        <taxon>Pseudomonadota</taxon>
        <taxon>Gammaproteobacteria</taxon>
        <taxon>Thiotrichales</taxon>
        <taxon>Francisellaceae</taxon>
        <taxon>Francisella</taxon>
    </lineage>
</organism>
<feature type="chain" id="PRO_1000020260" description="1-deoxy-D-xylulose 5-phosphate reductoisomerase">
    <location>
        <begin position="1"/>
        <end position="385"/>
    </location>
</feature>
<feature type="binding site" evidence="1">
    <location>
        <position position="13"/>
    </location>
    <ligand>
        <name>NADPH</name>
        <dbReference type="ChEBI" id="CHEBI:57783"/>
    </ligand>
</feature>
<feature type="binding site" evidence="1">
    <location>
        <position position="14"/>
    </location>
    <ligand>
        <name>NADPH</name>
        <dbReference type="ChEBI" id="CHEBI:57783"/>
    </ligand>
</feature>
<feature type="binding site" evidence="1">
    <location>
        <position position="15"/>
    </location>
    <ligand>
        <name>NADPH</name>
        <dbReference type="ChEBI" id="CHEBI:57783"/>
    </ligand>
</feature>
<feature type="binding site" evidence="1">
    <location>
        <position position="16"/>
    </location>
    <ligand>
        <name>NADPH</name>
        <dbReference type="ChEBI" id="CHEBI:57783"/>
    </ligand>
</feature>
<feature type="binding site" evidence="1">
    <location>
        <position position="40"/>
    </location>
    <ligand>
        <name>NADPH</name>
        <dbReference type="ChEBI" id="CHEBI:57783"/>
    </ligand>
</feature>
<feature type="binding site" evidence="1">
    <location>
        <position position="122"/>
    </location>
    <ligand>
        <name>NADPH</name>
        <dbReference type="ChEBI" id="CHEBI:57783"/>
    </ligand>
</feature>
<feature type="binding site" evidence="1">
    <location>
        <position position="123"/>
    </location>
    <ligand>
        <name>1-deoxy-D-xylulose 5-phosphate</name>
        <dbReference type="ChEBI" id="CHEBI:57792"/>
    </ligand>
</feature>
<feature type="binding site" evidence="1">
    <location>
        <position position="124"/>
    </location>
    <ligand>
        <name>NADPH</name>
        <dbReference type="ChEBI" id="CHEBI:57783"/>
    </ligand>
</feature>
<feature type="binding site" evidence="1">
    <location>
        <position position="148"/>
    </location>
    <ligand>
        <name>Mn(2+)</name>
        <dbReference type="ChEBI" id="CHEBI:29035"/>
    </ligand>
</feature>
<feature type="binding site" evidence="1">
    <location>
        <position position="149"/>
    </location>
    <ligand>
        <name>1-deoxy-D-xylulose 5-phosphate</name>
        <dbReference type="ChEBI" id="CHEBI:57792"/>
    </ligand>
</feature>
<feature type="binding site" evidence="1">
    <location>
        <position position="150"/>
    </location>
    <ligand>
        <name>1-deoxy-D-xylulose 5-phosphate</name>
        <dbReference type="ChEBI" id="CHEBI:57792"/>
    </ligand>
</feature>
<feature type="binding site" evidence="1">
    <location>
        <position position="150"/>
    </location>
    <ligand>
        <name>Mn(2+)</name>
        <dbReference type="ChEBI" id="CHEBI:29035"/>
    </ligand>
</feature>
<feature type="binding site" evidence="1">
    <location>
        <position position="177"/>
    </location>
    <ligand>
        <name>1-deoxy-D-xylulose 5-phosphate</name>
        <dbReference type="ChEBI" id="CHEBI:57792"/>
    </ligand>
</feature>
<feature type="binding site" evidence="1">
    <location>
        <position position="200"/>
    </location>
    <ligand>
        <name>1-deoxy-D-xylulose 5-phosphate</name>
        <dbReference type="ChEBI" id="CHEBI:57792"/>
    </ligand>
</feature>
<feature type="binding site" evidence="1">
    <location>
        <position position="206"/>
    </location>
    <ligand>
        <name>NADPH</name>
        <dbReference type="ChEBI" id="CHEBI:57783"/>
    </ligand>
</feature>
<feature type="binding site" evidence="1">
    <location>
        <position position="213"/>
    </location>
    <ligand>
        <name>1-deoxy-D-xylulose 5-phosphate</name>
        <dbReference type="ChEBI" id="CHEBI:57792"/>
    </ligand>
</feature>
<feature type="binding site" evidence="1">
    <location>
        <position position="218"/>
    </location>
    <ligand>
        <name>1-deoxy-D-xylulose 5-phosphate</name>
        <dbReference type="ChEBI" id="CHEBI:57792"/>
    </ligand>
</feature>
<feature type="binding site" evidence="1">
    <location>
        <position position="219"/>
    </location>
    <ligand>
        <name>1-deoxy-D-xylulose 5-phosphate</name>
        <dbReference type="ChEBI" id="CHEBI:57792"/>
    </ligand>
</feature>
<feature type="binding site" evidence="1">
    <location>
        <position position="222"/>
    </location>
    <ligand>
        <name>1-deoxy-D-xylulose 5-phosphate</name>
        <dbReference type="ChEBI" id="CHEBI:57792"/>
    </ligand>
</feature>
<feature type="binding site" evidence="1">
    <location>
        <position position="222"/>
    </location>
    <ligand>
        <name>Mn(2+)</name>
        <dbReference type="ChEBI" id="CHEBI:29035"/>
    </ligand>
</feature>
<comment type="function">
    <text evidence="1">Catalyzes the NADPH-dependent rearrangement and reduction of 1-deoxy-D-xylulose-5-phosphate (DXP) to 2-C-methyl-D-erythritol 4-phosphate (MEP).</text>
</comment>
<comment type="catalytic activity">
    <reaction evidence="1">
        <text>2-C-methyl-D-erythritol 4-phosphate + NADP(+) = 1-deoxy-D-xylulose 5-phosphate + NADPH + H(+)</text>
        <dbReference type="Rhea" id="RHEA:13717"/>
        <dbReference type="ChEBI" id="CHEBI:15378"/>
        <dbReference type="ChEBI" id="CHEBI:57783"/>
        <dbReference type="ChEBI" id="CHEBI:57792"/>
        <dbReference type="ChEBI" id="CHEBI:58262"/>
        <dbReference type="ChEBI" id="CHEBI:58349"/>
        <dbReference type="EC" id="1.1.1.267"/>
    </reaction>
    <physiologicalReaction direction="right-to-left" evidence="1">
        <dbReference type="Rhea" id="RHEA:13719"/>
    </physiologicalReaction>
</comment>
<comment type="cofactor">
    <cofactor evidence="1">
        <name>Mg(2+)</name>
        <dbReference type="ChEBI" id="CHEBI:18420"/>
    </cofactor>
    <cofactor evidence="1">
        <name>Mn(2+)</name>
        <dbReference type="ChEBI" id="CHEBI:29035"/>
    </cofactor>
</comment>
<comment type="pathway">
    <text evidence="1">Isoprenoid biosynthesis; isopentenyl diphosphate biosynthesis via DXP pathway; isopentenyl diphosphate from 1-deoxy-D-xylulose 5-phosphate: step 1/6.</text>
</comment>
<comment type="similarity">
    <text evidence="1">Belongs to the DXR family.</text>
</comment>